<feature type="signal peptide" evidence="1">
    <location>
        <begin position="1"/>
        <end position="19"/>
    </location>
</feature>
<feature type="chain" id="PRO_0000044581" description="Penicillin-insensitive murein endopeptidase">
    <location>
        <begin position="20"/>
        <end position="274"/>
    </location>
</feature>
<feature type="region of interest" description="Disordered" evidence="2">
    <location>
        <begin position="225"/>
        <end position="274"/>
    </location>
</feature>
<feature type="binding site" evidence="1">
    <location>
        <position position="110"/>
    </location>
    <ligand>
        <name>Zn(2+)</name>
        <dbReference type="ChEBI" id="CHEBI:29105"/>
        <label>1</label>
    </ligand>
</feature>
<feature type="binding site" evidence="1">
    <location>
        <position position="113"/>
    </location>
    <ligand>
        <name>Zn(2+)</name>
        <dbReference type="ChEBI" id="CHEBI:29105"/>
        <label>1</label>
    </ligand>
</feature>
<feature type="binding site" evidence="1">
    <location>
        <position position="120"/>
    </location>
    <ligand>
        <name>Zn(2+)</name>
        <dbReference type="ChEBI" id="CHEBI:29105"/>
        <label>1</label>
    </ligand>
</feature>
<feature type="binding site" evidence="1">
    <location>
        <position position="147"/>
    </location>
    <ligand>
        <name>Zn(2+)</name>
        <dbReference type="ChEBI" id="CHEBI:29105"/>
        <label>2</label>
    </ligand>
</feature>
<feature type="binding site" evidence="1">
    <location>
        <position position="150"/>
    </location>
    <ligand>
        <name>Zn(2+)</name>
        <dbReference type="ChEBI" id="CHEBI:29105"/>
        <label>2</label>
    </ligand>
</feature>
<feature type="binding site" evidence="1">
    <location>
        <position position="211"/>
    </location>
    <ligand>
        <name>Zn(2+)</name>
        <dbReference type="ChEBI" id="CHEBI:29105"/>
        <label>1</label>
    </ligand>
</feature>
<feature type="disulfide bond" evidence="1">
    <location>
        <begin position="44"/>
        <end position="265"/>
    </location>
</feature>
<feature type="disulfide bond" evidence="1">
    <location>
        <begin position="187"/>
        <end position="235"/>
    </location>
</feature>
<feature type="disulfide bond" evidence="1">
    <location>
        <begin position="216"/>
        <end position="223"/>
    </location>
</feature>
<reference key="1">
    <citation type="journal article" date="2001" name="Nature">
        <title>Complete genome sequence of a multiple drug resistant Salmonella enterica serovar Typhi CT18.</title>
        <authorList>
            <person name="Parkhill J."/>
            <person name="Dougan G."/>
            <person name="James K.D."/>
            <person name="Thomson N.R."/>
            <person name="Pickard D."/>
            <person name="Wain J."/>
            <person name="Churcher C.M."/>
            <person name="Mungall K.L."/>
            <person name="Bentley S.D."/>
            <person name="Holden M.T.G."/>
            <person name="Sebaihia M."/>
            <person name="Baker S."/>
            <person name="Basham D."/>
            <person name="Brooks K."/>
            <person name="Chillingworth T."/>
            <person name="Connerton P."/>
            <person name="Cronin A."/>
            <person name="Davis P."/>
            <person name="Davies R.M."/>
            <person name="Dowd L."/>
            <person name="White N."/>
            <person name="Farrar J."/>
            <person name="Feltwell T."/>
            <person name="Hamlin N."/>
            <person name="Haque A."/>
            <person name="Hien T.T."/>
            <person name="Holroyd S."/>
            <person name="Jagels K."/>
            <person name="Krogh A."/>
            <person name="Larsen T.S."/>
            <person name="Leather S."/>
            <person name="Moule S."/>
            <person name="O'Gaora P."/>
            <person name="Parry C."/>
            <person name="Quail M.A."/>
            <person name="Rutherford K.M."/>
            <person name="Simmonds M."/>
            <person name="Skelton J."/>
            <person name="Stevens K."/>
            <person name="Whitehead S."/>
            <person name="Barrell B.G."/>
        </authorList>
    </citation>
    <scope>NUCLEOTIDE SEQUENCE [LARGE SCALE GENOMIC DNA]</scope>
    <source>
        <strain>CT18</strain>
    </source>
</reference>
<reference key="2">
    <citation type="journal article" date="2003" name="J. Bacteriol.">
        <title>Comparative genomics of Salmonella enterica serovar Typhi strains Ty2 and CT18.</title>
        <authorList>
            <person name="Deng W."/>
            <person name="Liou S.-R."/>
            <person name="Plunkett G. III"/>
            <person name="Mayhew G.F."/>
            <person name="Rose D.J."/>
            <person name="Burland V."/>
            <person name="Kodoyianni V."/>
            <person name="Schwartz D.C."/>
            <person name="Blattner F.R."/>
        </authorList>
    </citation>
    <scope>NUCLEOTIDE SEQUENCE [LARGE SCALE GENOMIC DNA]</scope>
    <source>
        <strain>ATCC 700931 / Ty2</strain>
    </source>
</reference>
<protein>
    <recommendedName>
        <fullName evidence="1">Penicillin-insensitive murein endopeptidase</fullName>
        <ecNumber evidence="1">3.4.24.-</ecNumber>
    </recommendedName>
    <alternativeName>
        <fullName evidence="1">D-alanyl-D-alanine-endopeptidase</fullName>
        <shortName evidence="1">DD-endopeptidase</shortName>
    </alternativeName>
</protein>
<dbReference type="EC" id="3.4.24.-" evidence="1"/>
<dbReference type="EMBL" id="AL513382">
    <property type="protein sequence ID" value="CAD07615.1"/>
    <property type="molecule type" value="Genomic_DNA"/>
</dbReference>
<dbReference type="EMBL" id="AE014613">
    <property type="protein sequence ID" value="AAO68188.1"/>
    <property type="molecule type" value="Genomic_DNA"/>
</dbReference>
<dbReference type="RefSeq" id="NP_456924.1">
    <property type="nucleotide sequence ID" value="NC_003198.1"/>
</dbReference>
<dbReference type="RefSeq" id="WP_000750429.1">
    <property type="nucleotide sequence ID" value="NZ_WSUR01000045.1"/>
</dbReference>
<dbReference type="SMR" id="Q8Z4Z2"/>
<dbReference type="STRING" id="220341.gene:17586512"/>
<dbReference type="MEROPS" id="M74.001"/>
<dbReference type="KEGG" id="stt:t0481"/>
<dbReference type="KEGG" id="sty:STY2615"/>
<dbReference type="PATRIC" id="fig|220341.7.peg.2648"/>
<dbReference type="eggNOG" id="COG3770">
    <property type="taxonomic scope" value="Bacteria"/>
</dbReference>
<dbReference type="HOGENOM" id="CLU_052496_0_0_6"/>
<dbReference type="OMA" id="VRPWWGH"/>
<dbReference type="OrthoDB" id="1467367at2"/>
<dbReference type="Proteomes" id="UP000000541">
    <property type="component" value="Chromosome"/>
</dbReference>
<dbReference type="Proteomes" id="UP000002670">
    <property type="component" value="Chromosome"/>
</dbReference>
<dbReference type="GO" id="GO:0030288">
    <property type="term" value="C:outer membrane-bounded periplasmic space"/>
    <property type="evidence" value="ECO:0007669"/>
    <property type="project" value="InterPro"/>
</dbReference>
<dbReference type="GO" id="GO:0046872">
    <property type="term" value="F:metal ion binding"/>
    <property type="evidence" value="ECO:0007669"/>
    <property type="project" value="UniProtKB-KW"/>
</dbReference>
<dbReference type="GO" id="GO:0004222">
    <property type="term" value="F:metalloendopeptidase activity"/>
    <property type="evidence" value="ECO:0007669"/>
    <property type="project" value="UniProtKB-UniRule"/>
</dbReference>
<dbReference type="GO" id="GO:0004252">
    <property type="term" value="F:serine-type endopeptidase activity"/>
    <property type="evidence" value="ECO:0007669"/>
    <property type="project" value="InterPro"/>
</dbReference>
<dbReference type="GO" id="GO:0000270">
    <property type="term" value="P:peptidoglycan metabolic process"/>
    <property type="evidence" value="ECO:0007669"/>
    <property type="project" value="UniProtKB-UniRule"/>
</dbReference>
<dbReference type="GO" id="GO:0006508">
    <property type="term" value="P:proteolysis"/>
    <property type="evidence" value="ECO:0007669"/>
    <property type="project" value="UniProtKB-KW"/>
</dbReference>
<dbReference type="FunFam" id="3.30.1380.10:FF:000002">
    <property type="entry name" value="Penicillin-insensitive murein endopeptidase"/>
    <property type="match status" value="1"/>
</dbReference>
<dbReference type="Gene3D" id="3.30.1380.10">
    <property type="match status" value="1"/>
</dbReference>
<dbReference type="HAMAP" id="MF_01623">
    <property type="entry name" value="MepA"/>
    <property type="match status" value="1"/>
</dbReference>
<dbReference type="InterPro" id="IPR009045">
    <property type="entry name" value="Hedgehog_sig/DD-Pept_Zn-bd_sf"/>
</dbReference>
<dbReference type="InterPro" id="IPR005073">
    <property type="entry name" value="Peptidase_M74"/>
</dbReference>
<dbReference type="NCBIfam" id="NF006947">
    <property type="entry name" value="PRK09429.1"/>
    <property type="match status" value="1"/>
</dbReference>
<dbReference type="Pfam" id="PF03411">
    <property type="entry name" value="Peptidase_M74"/>
    <property type="match status" value="1"/>
</dbReference>
<dbReference type="PIRSF" id="PIRSF018455">
    <property type="entry name" value="MepA"/>
    <property type="match status" value="1"/>
</dbReference>
<dbReference type="SUPFAM" id="SSF55166">
    <property type="entry name" value="Hedgehog/DD-peptidase"/>
    <property type="match status" value="1"/>
</dbReference>
<keyword id="KW-1015">Disulfide bond</keyword>
<keyword id="KW-0378">Hydrolase</keyword>
<keyword id="KW-0479">Metal-binding</keyword>
<keyword id="KW-0482">Metalloprotease</keyword>
<keyword id="KW-0574">Periplasm</keyword>
<keyword id="KW-0645">Protease</keyword>
<keyword id="KW-0732">Signal</keyword>
<keyword id="KW-0862">Zinc</keyword>
<name>MEPA_SALTI</name>
<organism>
    <name type="scientific">Salmonella typhi</name>
    <dbReference type="NCBI Taxonomy" id="90370"/>
    <lineage>
        <taxon>Bacteria</taxon>
        <taxon>Pseudomonadati</taxon>
        <taxon>Pseudomonadota</taxon>
        <taxon>Gammaproteobacteria</taxon>
        <taxon>Enterobacterales</taxon>
        <taxon>Enterobacteriaceae</taxon>
        <taxon>Salmonella</taxon>
    </lineage>
</organism>
<sequence length="274" mass="30235">MKKTAIALLAWFVSSASLAATPWQKITHPVPGAAQSIGSFANGCIIGADTLPVQSDNYQVMRTDQRRYFGHPDLVMFIQRLSHQAQQRGLGTVLIGDMGMPAGGRFNGGHASHQTGLDVDIFLQLPKTRWSQAQLLRPQALDLVSRDGKHVVPSRWSSDIASLIKLAAQDNDVTRIFVNPAIKQQLCLDAGSDRDWLRKVRPWFQHRAHMHVRLRCPADSLECEDQPLPPPGDGCGAELQSWFEPPKPGTTKPEKKTPPPLPPSCQALLDEHVL</sequence>
<comment type="function">
    <text evidence="1">Murein endopeptidase that cleaves the D-alanyl-meso-2,6-diamino-pimelyl amide bond that connects peptidoglycan strands. Likely plays a role in the removal of murein from the sacculus.</text>
</comment>
<comment type="cofactor">
    <cofactor evidence="1">
        <name>Zn(2+)</name>
        <dbReference type="ChEBI" id="CHEBI:29105"/>
    </cofactor>
    <text evidence="1">Binds 2 Zn(2+) ions per subunit. Zn(2+) ion 1 is bound in the active site. Zn(2+) ion 2 is bound at the dimer interface by residues from both subunits.</text>
</comment>
<comment type="subunit">
    <text evidence="1">Dimer.</text>
</comment>
<comment type="subcellular location">
    <subcellularLocation>
        <location evidence="1">Periplasm</location>
    </subcellularLocation>
</comment>
<comment type="similarity">
    <text evidence="1">Belongs to the peptidase M74 family.</text>
</comment>
<evidence type="ECO:0000255" key="1">
    <source>
        <dbReference type="HAMAP-Rule" id="MF_01623"/>
    </source>
</evidence>
<evidence type="ECO:0000256" key="2">
    <source>
        <dbReference type="SAM" id="MobiDB-lite"/>
    </source>
</evidence>
<gene>
    <name evidence="1" type="primary">mepA</name>
    <name type="ordered locus">STY2615</name>
    <name type="ordered locus">t0481</name>
</gene>
<proteinExistence type="inferred from homology"/>
<accession>Q8Z4Z2</accession>
<accession>Q7CBC4</accession>